<dbReference type="EC" id="2.7.4.3" evidence="1"/>
<dbReference type="EMBL" id="CP000319">
    <property type="protein sequence ID" value="ABE62388.1"/>
    <property type="molecule type" value="Genomic_DNA"/>
</dbReference>
<dbReference type="RefSeq" id="WP_011510074.1">
    <property type="nucleotide sequence ID" value="NC_007964.1"/>
</dbReference>
<dbReference type="SMR" id="Q1QN09"/>
<dbReference type="STRING" id="323097.Nham_1566"/>
<dbReference type="KEGG" id="nha:Nham_1566"/>
<dbReference type="eggNOG" id="COG0563">
    <property type="taxonomic scope" value="Bacteria"/>
</dbReference>
<dbReference type="HOGENOM" id="CLU_032354_1_2_5"/>
<dbReference type="OrthoDB" id="9805030at2"/>
<dbReference type="UniPathway" id="UPA00588">
    <property type="reaction ID" value="UER00649"/>
</dbReference>
<dbReference type="Proteomes" id="UP000001953">
    <property type="component" value="Chromosome"/>
</dbReference>
<dbReference type="GO" id="GO:0005737">
    <property type="term" value="C:cytoplasm"/>
    <property type="evidence" value="ECO:0007669"/>
    <property type="project" value="UniProtKB-SubCell"/>
</dbReference>
<dbReference type="GO" id="GO:0004017">
    <property type="term" value="F:adenylate kinase activity"/>
    <property type="evidence" value="ECO:0007669"/>
    <property type="project" value="UniProtKB-UniRule"/>
</dbReference>
<dbReference type="GO" id="GO:0005524">
    <property type="term" value="F:ATP binding"/>
    <property type="evidence" value="ECO:0007669"/>
    <property type="project" value="UniProtKB-UniRule"/>
</dbReference>
<dbReference type="GO" id="GO:0044209">
    <property type="term" value="P:AMP salvage"/>
    <property type="evidence" value="ECO:0007669"/>
    <property type="project" value="UniProtKB-UniRule"/>
</dbReference>
<dbReference type="CDD" id="cd01428">
    <property type="entry name" value="ADK"/>
    <property type="match status" value="1"/>
</dbReference>
<dbReference type="Gene3D" id="3.40.50.300">
    <property type="entry name" value="P-loop containing nucleotide triphosphate hydrolases"/>
    <property type="match status" value="1"/>
</dbReference>
<dbReference type="HAMAP" id="MF_00235">
    <property type="entry name" value="Adenylate_kinase_Adk"/>
    <property type="match status" value="1"/>
</dbReference>
<dbReference type="InterPro" id="IPR006259">
    <property type="entry name" value="Adenyl_kin_sub"/>
</dbReference>
<dbReference type="InterPro" id="IPR000850">
    <property type="entry name" value="Adenylat/UMP-CMP_kin"/>
</dbReference>
<dbReference type="InterPro" id="IPR033690">
    <property type="entry name" value="Adenylat_kinase_CS"/>
</dbReference>
<dbReference type="InterPro" id="IPR027417">
    <property type="entry name" value="P-loop_NTPase"/>
</dbReference>
<dbReference type="NCBIfam" id="TIGR01351">
    <property type="entry name" value="adk"/>
    <property type="match status" value="1"/>
</dbReference>
<dbReference type="NCBIfam" id="NF001381">
    <property type="entry name" value="PRK00279.1-3"/>
    <property type="match status" value="1"/>
</dbReference>
<dbReference type="NCBIfam" id="NF011100">
    <property type="entry name" value="PRK14527.1"/>
    <property type="match status" value="1"/>
</dbReference>
<dbReference type="NCBIfam" id="NF011104">
    <property type="entry name" value="PRK14531.1"/>
    <property type="match status" value="1"/>
</dbReference>
<dbReference type="NCBIfam" id="NF011105">
    <property type="entry name" value="PRK14532.1"/>
    <property type="match status" value="1"/>
</dbReference>
<dbReference type="PANTHER" id="PTHR23359">
    <property type="entry name" value="NUCLEOTIDE KINASE"/>
    <property type="match status" value="1"/>
</dbReference>
<dbReference type="Pfam" id="PF00406">
    <property type="entry name" value="ADK"/>
    <property type="match status" value="1"/>
</dbReference>
<dbReference type="PRINTS" id="PR00094">
    <property type="entry name" value="ADENYLTKNASE"/>
</dbReference>
<dbReference type="SUPFAM" id="SSF52540">
    <property type="entry name" value="P-loop containing nucleoside triphosphate hydrolases"/>
    <property type="match status" value="1"/>
</dbReference>
<dbReference type="PROSITE" id="PS00113">
    <property type="entry name" value="ADENYLATE_KINASE"/>
    <property type="match status" value="1"/>
</dbReference>
<accession>Q1QN09</accession>
<keyword id="KW-0067">ATP-binding</keyword>
<keyword id="KW-0963">Cytoplasm</keyword>
<keyword id="KW-0418">Kinase</keyword>
<keyword id="KW-0545">Nucleotide biosynthesis</keyword>
<keyword id="KW-0547">Nucleotide-binding</keyword>
<keyword id="KW-1185">Reference proteome</keyword>
<keyword id="KW-0808">Transferase</keyword>
<organism>
    <name type="scientific">Nitrobacter hamburgensis (strain DSM 10229 / NCIMB 13809 / X14)</name>
    <dbReference type="NCBI Taxonomy" id="323097"/>
    <lineage>
        <taxon>Bacteria</taxon>
        <taxon>Pseudomonadati</taxon>
        <taxon>Pseudomonadota</taxon>
        <taxon>Alphaproteobacteria</taxon>
        <taxon>Hyphomicrobiales</taxon>
        <taxon>Nitrobacteraceae</taxon>
        <taxon>Nitrobacter</taxon>
    </lineage>
</organism>
<protein>
    <recommendedName>
        <fullName evidence="1">Adenylate kinase</fullName>
        <shortName evidence="1">AK</shortName>
        <ecNumber evidence="1">2.7.4.3</ecNumber>
    </recommendedName>
    <alternativeName>
        <fullName evidence="1">ATP-AMP transphosphorylase</fullName>
    </alternativeName>
    <alternativeName>
        <fullName evidence="1">ATP:AMP phosphotransferase</fullName>
    </alternativeName>
    <alternativeName>
        <fullName evidence="1">Adenylate monophosphate kinase</fullName>
    </alternativeName>
</protein>
<proteinExistence type="inferred from homology"/>
<reference key="1">
    <citation type="submission" date="2006-03" db="EMBL/GenBank/DDBJ databases">
        <title>Complete sequence of chromosome of Nitrobacter hamburgensis X14.</title>
        <authorList>
            <consortium name="US DOE Joint Genome Institute"/>
            <person name="Copeland A."/>
            <person name="Lucas S."/>
            <person name="Lapidus A."/>
            <person name="Barry K."/>
            <person name="Detter J.C."/>
            <person name="Glavina del Rio T."/>
            <person name="Hammon N."/>
            <person name="Israni S."/>
            <person name="Dalin E."/>
            <person name="Tice H."/>
            <person name="Pitluck S."/>
            <person name="Chain P."/>
            <person name="Malfatti S."/>
            <person name="Shin M."/>
            <person name="Vergez L."/>
            <person name="Schmutz J."/>
            <person name="Larimer F."/>
            <person name="Land M."/>
            <person name="Hauser L."/>
            <person name="Kyrpides N."/>
            <person name="Ivanova N."/>
            <person name="Ward B."/>
            <person name="Arp D."/>
            <person name="Klotz M."/>
            <person name="Stein L."/>
            <person name="O'Mullan G."/>
            <person name="Starkenburg S."/>
            <person name="Sayavedra L."/>
            <person name="Poret-Peterson A.T."/>
            <person name="Gentry M.E."/>
            <person name="Bruce D."/>
            <person name="Richardson P."/>
        </authorList>
    </citation>
    <scope>NUCLEOTIDE SEQUENCE [LARGE SCALE GENOMIC DNA]</scope>
    <source>
        <strain>DSM 10229 / NCIMB 13809 / X14</strain>
    </source>
</reference>
<sequence>MRLILLGPPGAGKGTQAQRLVHHHGIVQLSTGEMLRAAVAAGTPVGLKAKDVMASGGLVPDDVVIGIISDRLDQSDAKNGFILDGFPRTVPQAEALDRLLKSKNLKLDAVVELCVNESALLQRVESRVAEMTARGEQVRADDTPEVLSKRLASYRALTEPLIHYYSERGKLLTVDGMMPIEQVTRDIYRVLEEAIGASDVQSRGKGAG</sequence>
<gene>
    <name evidence="1" type="primary">adk</name>
    <name type="ordered locus">Nham_1566</name>
</gene>
<evidence type="ECO:0000255" key="1">
    <source>
        <dbReference type="HAMAP-Rule" id="MF_00235"/>
    </source>
</evidence>
<name>KAD_NITHX</name>
<comment type="function">
    <text evidence="1">Catalyzes the reversible transfer of the terminal phosphate group between ATP and AMP. Plays an important role in cellular energy homeostasis and in adenine nucleotide metabolism.</text>
</comment>
<comment type="catalytic activity">
    <reaction evidence="1">
        <text>AMP + ATP = 2 ADP</text>
        <dbReference type="Rhea" id="RHEA:12973"/>
        <dbReference type="ChEBI" id="CHEBI:30616"/>
        <dbReference type="ChEBI" id="CHEBI:456215"/>
        <dbReference type="ChEBI" id="CHEBI:456216"/>
        <dbReference type="EC" id="2.7.4.3"/>
    </reaction>
</comment>
<comment type="pathway">
    <text evidence="1">Purine metabolism; AMP biosynthesis via salvage pathway; AMP from ADP: step 1/1.</text>
</comment>
<comment type="subunit">
    <text evidence="1">Monomer.</text>
</comment>
<comment type="subcellular location">
    <subcellularLocation>
        <location evidence="1">Cytoplasm</location>
    </subcellularLocation>
</comment>
<comment type="domain">
    <text evidence="1">Consists of three domains, a large central CORE domain and two small peripheral domains, NMPbind and LID, which undergo movements during catalysis. The LID domain closes over the site of phosphoryl transfer upon ATP binding. Assembling and dissambling the active center during each catalytic cycle provides an effective means to prevent ATP hydrolysis.</text>
</comment>
<comment type="similarity">
    <text evidence="1">Belongs to the adenylate kinase family.</text>
</comment>
<feature type="chain" id="PRO_1000058864" description="Adenylate kinase">
    <location>
        <begin position="1"/>
        <end position="208"/>
    </location>
</feature>
<feature type="region of interest" description="NMP" evidence="1">
    <location>
        <begin position="30"/>
        <end position="59"/>
    </location>
</feature>
<feature type="region of interest" description="LID" evidence="1">
    <location>
        <begin position="126"/>
        <end position="142"/>
    </location>
</feature>
<feature type="binding site" evidence="1">
    <location>
        <begin position="10"/>
        <end position="15"/>
    </location>
    <ligand>
        <name>ATP</name>
        <dbReference type="ChEBI" id="CHEBI:30616"/>
    </ligand>
</feature>
<feature type="binding site" evidence="1">
    <location>
        <position position="31"/>
    </location>
    <ligand>
        <name>AMP</name>
        <dbReference type="ChEBI" id="CHEBI:456215"/>
    </ligand>
</feature>
<feature type="binding site" evidence="1">
    <location>
        <position position="36"/>
    </location>
    <ligand>
        <name>AMP</name>
        <dbReference type="ChEBI" id="CHEBI:456215"/>
    </ligand>
</feature>
<feature type="binding site" evidence="1">
    <location>
        <begin position="57"/>
        <end position="59"/>
    </location>
    <ligand>
        <name>AMP</name>
        <dbReference type="ChEBI" id="CHEBI:456215"/>
    </ligand>
</feature>
<feature type="binding site" evidence="1">
    <location>
        <begin position="85"/>
        <end position="88"/>
    </location>
    <ligand>
        <name>AMP</name>
        <dbReference type="ChEBI" id="CHEBI:456215"/>
    </ligand>
</feature>
<feature type="binding site" evidence="1">
    <location>
        <position position="92"/>
    </location>
    <ligand>
        <name>AMP</name>
        <dbReference type="ChEBI" id="CHEBI:456215"/>
    </ligand>
</feature>
<feature type="binding site" evidence="1">
    <location>
        <position position="127"/>
    </location>
    <ligand>
        <name>ATP</name>
        <dbReference type="ChEBI" id="CHEBI:30616"/>
    </ligand>
</feature>
<feature type="binding site" evidence="1">
    <location>
        <position position="139"/>
    </location>
    <ligand>
        <name>AMP</name>
        <dbReference type="ChEBI" id="CHEBI:456215"/>
    </ligand>
</feature>
<feature type="binding site" evidence="1">
    <location>
        <position position="150"/>
    </location>
    <ligand>
        <name>AMP</name>
        <dbReference type="ChEBI" id="CHEBI:456215"/>
    </ligand>
</feature>
<feature type="binding site" evidence="1">
    <location>
        <position position="178"/>
    </location>
    <ligand>
        <name>ATP</name>
        <dbReference type="ChEBI" id="CHEBI:30616"/>
    </ligand>
</feature>